<feature type="chain" id="PRO_1000093644" description="DNA mismatch repair protein MutS">
    <location>
        <begin position="1"/>
        <end position="855"/>
    </location>
</feature>
<feature type="binding site" evidence="1">
    <location>
        <begin position="616"/>
        <end position="623"/>
    </location>
    <ligand>
        <name>ATP</name>
        <dbReference type="ChEBI" id="CHEBI:30616"/>
    </ligand>
</feature>
<evidence type="ECO:0000255" key="1">
    <source>
        <dbReference type="HAMAP-Rule" id="MF_00096"/>
    </source>
</evidence>
<comment type="function">
    <text evidence="1">This protein is involved in the repair of mismatches in DNA. It is possible that it carries out the mismatch recognition step. This protein has a weak ATPase activity.</text>
</comment>
<comment type="similarity">
    <text evidence="1">Belongs to the DNA mismatch repair MutS family.</text>
</comment>
<keyword id="KW-0067">ATP-binding</keyword>
<keyword id="KW-0227">DNA damage</keyword>
<keyword id="KW-0234">DNA repair</keyword>
<keyword id="KW-0238">DNA-binding</keyword>
<keyword id="KW-0547">Nucleotide-binding</keyword>
<organism>
    <name type="scientific">Salmonella newport (strain SL254)</name>
    <dbReference type="NCBI Taxonomy" id="423368"/>
    <lineage>
        <taxon>Bacteria</taxon>
        <taxon>Pseudomonadati</taxon>
        <taxon>Pseudomonadota</taxon>
        <taxon>Gammaproteobacteria</taxon>
        <taxon>Enterobacterales</taxon>
        <taxon>Enterobacteriaceae</taxon>
        <taxon>Salmonella</taxon>
    </lineage>
</organism>
<dbReference type="EMBL" id="CP001113">
    <property type="protein sequence ID" value="ACF64620.1"/>
    <property type="molecule type" value="Genomic_DNA"/>
</dbReference>
<dbReference type="RefSeq" id="WP_001005814.1">
    <property type="nucleotide sequence ID" value="NZ_CCMR01000001.1"/>
</dbReference>
<dbReference type="SMR" id="B4T436"/>
<dbReference type="KEGG" id="see:SNSL254_A3114"/>
<dbReference type="HOGENOM" id="CLU_002472_4_0_6"/>
<dbReference type="Proteomes" id="UP000008824">
    <property type="component" value="Chromosome"/>
</dbReference>
<dbReference type="GO" id="GO:0005829">
    <property type="term" value="C:cytosol"/>
    <property type="evidence" value="ECO:0007669"/>
    <property type="project" value="TreeGrafter"/>
</dbReference>
<dbReference type="GO" id="GO:0005524">
    <property type="term" value="F:ATP binding"/>
    <property type="evidence" value="ECO:0007669"/>
    <property type="project" value="UniProtKB-UniRule"/>
</dbReference>
<dbReference type="GO" id="GO:0140664">
    <property type="term" value="F:ATP-dependent DNA damage sensor activity"/>
    <property type="evidence" value="ECO:0007669"/>
    <property type="project" value="InterPro"/>
</dbReference>
<dbReference type="GO" id="GO:0003684">
    <property type="term" value="F:damaged DNA binding"/>
    <property type="evidence" value="ECO:0007669"/>
    <property type="project" value="UniProtKB-UniRule"/>
</dbReference>
<dbReference type="GO" id="GO:0030983">
    <property type="term" value="F:mismatched DNA binding"/>
    <property type="evidence" value="ECO:0007669"/>
    <property type="project" value="InterPro"/>
</dbReference>
<dbReference type="GO" id="GO:0006298">
    <property type="term" value="P:mismatch repair"/>
    <property type="evidence" value="ECO:0007669"/>
    <property type="project" value="UniProtKB-UniRule"/>
</dbReference>
<dbReference type="CDD" id="cd03284">
    <property type="entry name" value="ABC_MutS1"/>
    <property type="match status" value="1"/>
</dbReference>
<dbReference type="FunFam" id="1.10.1420.10:FF:000002">
    <property type="entry name" value="DNA mismatch repair protein MutS"/>
    <property type="match status" value="1"/>
</dbReference>
<dbReference type="FunFam" id="3.30.420.110:FF:000001">
    <property type="entry name" value="DNA mismatch repair protein MutS"/>
    <property type="match status" value="1"/>
</dbReference>
<dbReference type="FunFam" id="3.40.1170.10:FF:000001">
    <property type="entry name" value="DNA mismatch repair protein MutS"/>
    <property type="match status" value="1"/>
</dbReference>
<dbReference type="FunFam" id="3.40.50.300:FF:000283">
    <property type="entry name" value="DNA mismatch repair protein MutS"/>
    <property type="match status" value="1"/>
</dbReference>
<dbReference type="Gene3D" id="1.10.1420.10">
    <property type="match status" value="2"/>
</dbReference>
<dbReference type="Gene3D" id="6.10.140.430">
    <property type="match status" value="1"/>
</dbReference>
<dbReference type="Gene3D" id="3.40.1170.10">
    <property type="entry name" value="DNA repair protein MutS, domain I"/>
    <property type="match status" value="1"/>
</dbReference>
<dbReference type="Gene3D" id="3.30.420.110">
    <property type="entry name" value="MutS, connector domain"/>
    <property type="match status" value="1"/>
</dbReference>
<dbReference type="Gene3D" id="3.40.50.300">
    <property type="entry name" value="P-loop containing nucleotide triphosphate hydrolases"/>
    <property type="match status" value="1"/>
</dbReference>
<dbReference type="HAMAP" id="MF_00096">
    <property type="entry name" value="MutS"/>
    <property type="match status" value="1"/>
</dbReference>
<dbReference type="InterPro" id="IPR005748">
    <property type="entry name" value="DNA_mismatch_repair_MutS"/>
</dbReference>
<dbReference type="InterPro" id="IPR007695">
    <property type="entry name" value="DNA_mismatch_repair_MutS-lik_N"/>
</dbReference>
<dbReference type="InterPro" id="IPR017261">
    <property type="entry name" value="DNA_mismatch_repair_MutS/MSH"/>
</dbReference>
<dbReference type="InterPro" id="IPR000432">
    <property type="entry name" value="DNA_mismatch_repair_MutS_C"/>
</dbReference>
<dbReference type="InterPro" id="IPR007861">
    <property type="entry name" value="DNA_mismatch_repair_MutS_clamp"/>
</dbReference>
<dbReference type="InterPro" id="IPR007696">
    <property type="entry name" value="DNA_mismatch_repair_MutS_core"/>
</dbReference>
<dbReference type="InterPro" id="IPR016151">
    <property type="entry name" value="DNA_mismatch_repair_MutS_N"/>
</dbReference>
<dbReference type="InterPro" id="IPR036187">
    <property type="entry name" value="DNA_mismatch_repair_MutS_sf"/>
</dbReference>
<dbReference type="InterPro" id="IPR007860">
    <property type="entry name" value="DNA_mmatch_repair_MutS_con_dom"/>
</dbReference>
<dbReference type="InterPro" id="IPR045076">
    <property type="entry name" value="MutS"/>
</dbReference>
<dbReference type="InterPro" id="IPR036678">
    <property type="entry name" value="MutS_con_dom_sf"/>
</dbReference>
<dbReference type="InterPro" id="IPR027417">
    <property type="entry name" value="P-loop_NTPase"/>
</dbReference>
<dbReference type="NCBIfam" id="TIGR01070">
    <property type="entry name" value="mutS1"/>
    <property type="match status" value="1"/>
</dbReference>
<dbReference type="NCBIfam" id="NF003810">
    <property type="entry name" value="PRK05399.1"/>
    <property type="match status" value="1"/>
</dbReference>
<dbReference type="PANTHER" id="PTHR11361:SF34">
    <property type="entry name" value="DNA MISMATCH REPAIR PROTEIN MSH1, MITOCHONDRIAL"/>
    <property type="match status" value="1"/>
</dbReference>
<dbReference type="PANTHER" id="PTHR11361">
    <property type="entry name" value="DNA MISMATCH REPAIR PROTEIN MUTS FAMILY MEMBER"/>
    <property type="match status" value="1"/>
</dbReference>
<dbReference type="Pfam" id="PF01624">
    <property type="entry name" value="MutS_I"/>
    <property type="match status" value="1"/>
</dbReference>
<dbReference type="Pfam" id="PF05188">
    <property type="entry name" value="MutS_II"/>
    <property type="match status" value="1"/>
</dbReference>
<dbReference type="Pfam" id="PF05192">
    <property type="entry name" value="MutS_III"/>
    <property type="match status" value="1"/>
</dbReference>
<dbReference type="Pfam" id="PF05190">
    <property type="entry name" value="MutS_IV"/>
    <property type="match status" value="1"/>
</dbReference>
<dbReference type="Pfam" id="PF00488">
    <property type="entry name" value="MutS_V"/>
    <property type="match status" value="1"/>
</dbReference>
<dbReference type="PIRSF" id="PIRSF037677">
    <property type="entry name" value="DNA_mis_repair_Msh6"/>
    <property type="match status" value="1"/>
</dbReference>
<dbReference type="SMART" id="SM00534">
    <property type="entry name" value="MUTSac"/>
    <property type="match status" value="1"/>
</dbReference>
<dbReference type="SMART" id="SM00533">
    <property type="entry name" value="MUTSd"/>
    <property type="match status" value="1"/>
</dbReference>
<dbReference type="SUPFAM" id="SSF55271">
    <property type="entry name" value="DNA repair protein MutS, domain I"/>
    <property type="match status" value="1"/>
</dbReference>
<dbReference type="SUPFAM" id="SSF53150">
    <property type="entry name" value="DNA repair protein MutS, domain II"/>
    <property type="match status" value="1"/>
</dbReference>
<dbReference type="SUPFAM" id="SSF48334">
    <property type="entry name" value="DNA repair protein MutS, domain III"/>
    <property type="match status" value="1"/>
</dbReference>
<dbReference type="SUPFAM" id="SSF52540">
    <property type="entry name" value="P-loop containing nucleoside triphosphate hydrolases"/>
    <property type="match status" value="1"/>
</dbReference>
<dbReference type="PROSITE" id="PS00486">
    <property type="entry name" value="DNA_MISMATCH_REPAIR_2"/>
    <property type="match status" value="1"/>
</dbReference>
<accession>B4T436</accession>
<name>MUTS_SALNS</name>
<gene>
    <name evidence="1" type="primary">mutS</name>
    <name type="ordered locus">SNSL254_A3114</name>
</gene>
<reference key="1">
    <citation type="journal article" date="2011" name="J. Bacteriol.">
        <title>Comparative genomics of 28 Salmonella enterica isolates: evidence for CRISPR-mediated adaptive sublineage evolution.</title>
        <authorList>
            <person name="Fricke W.F."/>
            <person name="Mammel M.K."/>
            <person name="McDermott P.F."/>
            <person name="Tartera C."/>
            <person name="White D.G."/>
            <person name="Leclerc J.E."/>
            <person name="Ravel J."/>
            <person name="Cebula T.A."/>
        </authorList>
    </citation>
    <scope>NUCLEOTIDE SEQUENCE [LARGE SCALE GENOMIC DNA]</scope>
    <source>
        <strain>SL254</strain>
    </source>
</reference>
<proteinExistence type="inferred from homology"/>
<sequence>MNESFDKDFSNHTPMMQQYLKLKAQHPEILLFYRMGDFYELFYDDAKRASQLLDISLTKRGASAGEPIPMAGIPHHAVENYLAKLVNQGESVAICEQIGDPATSKGPVERKVVRIVTPGTISDEALLQERQDNLLAAIWQDGKGYGYATLDISSGRFRLSEPADRETMAAELQRTNPAELLYAEDFAEMALIEGRRGLRRRPLWEFEIDTARQQLNLQFGTRDLVGFGVENASRGLCAAGCLLQYVKDTQRTSLPHIRSITMERQQDSIIMDAATRRNLEITQNLAGGVENTLAAVLDCTVTPMGSRMLKRWLHMPVRNTNILRERQQTIGALQDTVSELQPVLRQVGDLERILARLALRTARPRDLARMRHAFQQLPELHAQLETVDSAPVQALRKKMGDFAELRDLLERAIIDAPPVLVRDGGVIAPGYHEELDEWRALADGATDYLDRLEIRERERTGLDTLKVGYNAVHGYYIQISRGQSHLAPINYVRRQTLKNAERYIIPELKEYEDKVLTSKGKALALEKQLYDELFDLLLPHLADLQQSANALAELDVLVNLAERAWTLNYTCPTFTDKPGIRITEGRHPVVEQVLNEPFIANPLNLSPQRRMLIITGPNMGGKSTYMRQTALIALLAYIGSYVPAQNVEIGPIDRIFTRVGAADDLASGRSTFMVEMTETANILHNATENSLVLMDEIGRGTSTYDGLSLAWACAENLANKIKALTLFATHYFELTQLPEKMEGVANVHLDALEHGDTIAFMHSVQDGAASKSYGLAVAALAGVPKEVIKRARQKLRELESISPNAAATQVDGTQMSLLAAPEETSPAVEALENLDPDSLTPRQALEWIYRLKSLV</sequence>
<protein>
    <recommendedName>
        <fullName evidence="1">DNA mismatch repair protein MutS</fullName>
    </recommendedName>
</protein>